<dbReference type="EMBL" id="U43703">
    <property type="protein sequence ID" value="AAB68234.1"/>
    <property type="molecule type" value="Genomic_DNA"/>
</dbReference>
<dbReference type="PIR" id="S70041">
    <property type="entry name" value="S70041"/>
</dbReference>
<dbReference type="DIP" id="DIP-4037N"/>
<dbReference type="IntAct" id="O13519">
    <property type="interactions" value="1"/>
</dbReference>
<dbReference type="STRING" id="4932.YPL136W"/>
<dbReference type="PaxDb" id="4932-YPL136W"/>
<dbReference type="EnsemblFungi" id="YPL136W_mRNA">
    <property type="protein sequence ID" value="YPL136W"/>
    <property type="gene ID" value="YPL136W"/>
</dbReference>
<dbReference type="AGR" id="SGD:S000006057"/>
<dbReference type="SGD" id="S000006057">
    <property type="gene designation" value="YPL136W"/>
</dbReference>
<dbReference type="HOGENOM" id="CLU_2028529_0_0_1"/>
<reference key="1">
    <citation type="journal article" date="1997" name="Nature">
        <title>The nucleotide sequence of Saccharomyces cerevisiae chromosome XVI.</title>
        <authorList>
            <person name="Bussey H."/>
            <person name="Storms R.K."/>
            <person name="Ahmed A."/>
            <person name="Albermann K."/>
            <person name="Allen E."/>
            <person name="Ansorge W."/>
            <person name="Araujo R."/>
            <person name="Aparicio A."/>
            <person name="Barrell B.G."/>
            <person name="Badcock K."/>
            <person name="Benes V."/>
            <person name="Botstein D."/>
            <person name="Bowman S."/>
            <person name="Brueckner M."/>
            <person name="Carpenter J."/>
            <person name="Cherry J.M."/>
            <person name="Chung E."/>
            <person name="Churcher C.M."/>
            <person name="Coster F."/>
            <person name="Davis K."/>
            <person name="Davis R.W."/>
            <person name="Dietrich F.S."/>
            <person name="Delius H."/>
            <person name="DiPaolo T."/>
            <person name="Dubois E."/>
            <person name="Duesterhoeft A."/>
            <person name="Duncan M."/>
            <person name="Floeth M."/>
            <person name="Fortin N."/>
            <person name="Friesen J.D."/>
            <person name="Fritz C."/>
            <person name="Goffeau A."/>
            <person name="Hall J."/>
            <person name="Hebling U."/>
            <person name="Heumann K."/>
            <person name="Hilbert H."/>
            <person name="Hillier L.W."/>
            <person name="Hunicke-Smith S."/>
            <person name="Hyman R.W."/>
            <person name="Johnston M."/>
            <person name="Kalman S."/>
            <person name="Kleine K."/>
            <person name="Komp C."/>
            <person name="Kurdi O."/>
            <person name="Lashkari D."/>
            <person name="Lew H."/>
            <person name="Lin A."/>
            <person name="Lin D."/>
            <person name="Louis E.J."/>
            <person name="Marathe R."/>
            <person name="Messenguy F."/>
            <person name="Mewes H.-W."/>
            <person name="Mirtipati S."/>
            <person name="Moestl D."/>
            <person name="Mueller-Auer S."/>
            <person name="Namath A."/>
            <person name="Nentwich U."/>
            <person name="Oefner P."/>
            <person name="Pearson D."/>
            <person name="Petel F.X."/>
            <person name="Pohl T.M."/>
            <person name="Purnelle B."/>
            <person name="Rajandream M.A."/>
            <person name="Rechmann S."/>
            <person name="Rieger M."/>
            <person name="Riles L."/>
            <person name="Roberts D."/>
            <person name="Schaefer M."/>
            <person name="Scharfe M."/>
            <person name="Scherens B."/>
            <person name="Schramm S."/>
            <person name="Schroeder M."/>
            <person name="Sdicu A.-M."/>
            <person name="Tettelin H."/>
            <person name="Urrestarazu L.A."/>
            <person name="Ushinsky S."/>
            <person name="Vierendeels F."/>
            <person name="Vissers S."/>
            <person name="Voss H."/>
            <person name="Walsh S.V."/>
            <person name="Wambutt R."/>
            <person name="Wang Y."/>
            <person name="Wedler E."/>
            <person name="Wedler H."/>
            <person name="Winnett E."/>
            <person name="Zhong W.-W."/>
            <person name="Zollner A."/>
            <person name="Vo D.H."/>
            <person name="Hani J."/>
        </authorList>
    </citation>
    <scope>NUCLEOTIDE SEQUENCE [LARGE SCALE GENOMIC DNA]</scope>
    <source>
        <strain>ATCC 204508 / S288c</strain>
    </source>
</reference>
<reference key="2">
    <citation type="journal article" date="2014" name="G3 (Bethesda)">
        <title>The reference genome sequence of Saccharomyces cerevisiae: Then and now.</title>
        <authorList>
            <person name="Engel S.R."/>
            <person name="Dietrich F.S."/>
            <person name="Fisk D.G."/>
            <person name="Binkley G."/>
            <person name="Balakrishnan R."/>
            <person name="Costanzo M.C."/>
            <person name="Dwight S.S."/>
            <person name="Hitz B.C."/>
            <person name="Karra K."/>
            <person name="Nash R.S."/>
            <person name="Weng S."/>
            <person name="Wong E.D."/>
            <person name="Lloyd P."/>
            <person name="Skrzypek M.S."/>
            <person name="Miyasato S.R."/>
            <person name="Simison M."/>
            <person name="Cherry J.M."/>
        </authorList>
    </citation>
    <scope>GENOME REANNOTATION</scope>
    <source>
        <strain>ATCC 204508 / S288c</strain>
    </source>
</reference>
<gene>
    <name type="ordered locus">YPL136W</name>
</gene>
<proteinExistence type="uncertain"/>
<accession>O13519</accession>
<evidence type="ECO:0000255" key="1"/>
<evidence type="ECO:0000305" key="2"/>
<evidence type="ECO:0000305" key="3">
    <source>
    </source>
</evidence>
<sequence length="122" mass="12929">MASTVAGLSMSAESLRLPLLIGVSSGMLSVSDAEVLPSFLFKSGFSVLQSAALDTDDDLARGLSLLDLLPLVLLSPFFEEDVDEEEAGDVEGLDGFVFVFRLLLPLYNQSTGTSNSVLVIIT</sequence>
<keyword id="KW-0732">Signal</keyword>
<comment type="miscellaneous">
    <text evidence="2">Completely overlaps GIP3.</text>
</comment>
<comment type="caution">
    <text evidence="3">Product of a dubious gene prediction unlikely to encode a functional protein. Because of that it is not part of the S.cerevisiae S288c complete/reference proteome set.</text>
</comment>
<protein>
    <recommendedName>
        <fullName>Putative uncharacterized protein YPL136W</fullName>
    </recommendedName>
</protein>
<organism>
    <name type="scientific">Saccharomyces cerevisiae (strain ATCC 204508 / S288c)</name>
    <name type="common">Baker's yeast</name>
    <dbReference type="NCBI Taxonomy" id="559292"/>
    <lineage>
        <taxon>Eukaryota</taxon>
        <taxon>Fungi</taxon>
        <taxon>Dikarya</taxon>
        <taxon>Ascomycota</taxon>
        <taxon>Saccharomycotina</taxon>
        <taxon>Saccharomycetes</taxon>
        <taxon>Saccharomycetales</taxon>
        <taxon>Saccharomycetaceae</taxon>
        <taxon>Saccharomyces</taxon>
    </lineage>
</organism>
<feature type="signal peptide" evidence="1">
    <location>
        <begin position="1"/>
        <end position="33"/>
    </location>
</feature>
<feature type="chain" id="PRO_0000299805" description="Putative uncharacterized protein YPL136W">
    <location>
        <begin position="34"/>
        <end position="122"/>
    </location>
</feature>
<name>YP136_YEAST</name>